<feature type="chain" id="PRO_0000211499" description="Charged multivesicular body protein 4c">
    <location>
        <begin position="1"/>
        <end position="227"/>
    </location>
</feature>
<feature type="region of interest" description="Disordered" evidence="4">
    <location>
        <begin position="1"/>
        <end position="27"/>
    </location>
</feature>
<feature type="region of interest" description="Disordered" evidence="4">
    <location>
        <begin position="178"/>
        <end position="227"/>
    </location>
</feature>
<feature type="coiled-coil region" evidence="3">
    <location>
        <begin position="32"/>
        <end position="94"/>
    </location>
</feature>
<feature type="coiled-coil region" evidence="3">
    <location>
        <begin position="129"/>
        <end position="187"/>
    </location>
</feature>
<feature type="compositionally biased region" description="Low complexity" evidence="4">
    <location>
        <begin position="189"/>
        <end position="206"/>
    </location>
</feature>
<gene>
    <name type="primary">chmp4c</name>
</gene>
<evidence type="ECO:0000250" key="1"/>
<evidence type="ECO:0000250" key="2">
    <source>
        <dbReference type="UniProtKB" id="Q96CF2"/>
    </source>
</evidence>
<evidence type="ECO:0000255" key="3"/>
<evidence type="ECO:0000256" key="4">
    <source>
        <dbReference type="SAM" id="MobiDB-lite"/>
    </source>
</evidence>
<evidence type="ECO:0000305" key="5"/>
<protein>
    <recommendedName>
        <fullName>Charged multivesicular body protein 4c</fullName>
    </recommendedName>
    <alternativeName>
        <fullName>Chromatin-modifying protein 4c</fullName>
        <shortName>CHMP4c</shortName>
    </alternativeName>
</protein>
<proteinExistence type="evidence at transcript level"/>
<comment type="function">
    <text evidence="2">Probable core component of the endosomal sorting required for transport complex III (ESCRT-III) which is involved in multivesicular bodies (MVBs) formation and sorting of endosomal cargo proteins into MVBs. MVBs contain intraluminal vesicles (ILVs) that are generated by invagination and scission from the limiting membrane of the endosome and mostly are delivered to lysosomes enabling degradation of membrane proteins, such as stimulated growth factor receptors, lysosomal enzymes and lipids. Key component of the cytokinesis checkpoint, a process required to delay abscission to prevent both premature resolution of intercellular chromosome bridges and accumulation of DNA damage (By similarity).</text>
</comment>
<comment type="subunit">
    <text evidence="2">Probable core component of the endosomal sorting required for transport complex III (ESCRT-III). ESCRT-III components are thought to multimerize to form a flat lattice on the perimeter membrane of the endosome (By similarity).</text>
</comment>
<comment type="subcellular location">
    <subcellularLocation>
        <location evidence="1">Cytoplasm</location>
        <location evidence="1">Cytosol</location>
    </subcellularLocation>
    <subcellularLocation>
        <location evidence="1">Late endosome membrane</location>
        <topology evidence="1">Peripheral membrane protein</topology>
    </subcellularLocation>
</comment>
<comment type="similarity">
    <text evidence="5">Belongs to the SNF7 family.</text>
</comment>
<reference key="1">
    <citation type="submission" date="2004-06" db="EMBL/GenBank/DDBJ databases">
        <authorList>
            <consortium name="NIH - Xenopus Gene Collection (XGC) project"/>
        </authorList>
    </citation>
    <scope>NUCLEOTIDE SEQUENCE [LARGE SCALE MRNA]</scope>
    <source>
        <tissue>Embryo</tissue>
    </source>
</reference>
<name>CHM4C_XENLA</name>
<organism>
    <name type="scientific">Xenopus laevis</name>
    <name type="common">African clawed frog</name>
    <dbReference type="NCBI Taxonomy" id="8355"/>
    <lineage>
        <taxon>Eukaryota</taxon>
        <taxon>Metazoa</taxon>
        <taxon>Chordata</taxon>
        <taxon>Craniata</taxon>
        <taxon>Vertebrata</taxon>
        <taxon>Euteleostomi</taxon>
        <taxon>Amphibia</taxon>
        <taxon>Batrachia</taxon>
        <taxon>Anura</taxon>
        <taxon>Pipoidea</taxon>
        <taxon>Pipidae</taxon>
        <taxon>Xenopodinae</taxon>
        <taxon>Xenopus</taxon>
        <taxon>Xenopus</taxon>
    </lineage>
</organism>
<keyword id="KW-0175">Coiled coil</keyword>
<keyword id="KW-0963">Cytoplasm</keyword>
<keyword id="KW-0967">Endosome</keyword>
<keyword id="KW-0472">Membrane</keyword>
<keyword id="KW-0653">Protein transport</keyword>
<keyword id="KW-1185">Reference proteome</keyword>
<keyword id="KW-0813">Transport</keyword>
<sequence length="227" mass="25480">MSKITKLFKSSGGSGSSSKNRKGPSAQEALFKLRETEEMLTKKQEYLEKKIELELATAKKHGTKNKRAALQALKKKKRLEKQLAQIDGTLSTIEFQREALENSHTNTEVLKNMGYAAKAMKAAHENMDLEKIDDLMQDIHEQQDVAQEISDAISRPVGFGDEFDEDELLEELEELEQEDLNSQMANVNLPSVPSSKLPSTKLPSRPASSRKKVEDDDDMQMLAAWAT</sequence>
<accession>Q6GNN8</accession>
<dbReference type="EMBL" id="BC073466">
    <property type="protein sequence ID" value="AAH73466.1"/>
    <property type="molecule type" value="mRNA"/>
</dbReference>
<dbReference type="RefSeq" id="NP_001085880.1">
    <property type="nucleotide sequence ID" value="NM_001092411.1"/>
</dbReference>
<dbReference type="SMR" id="Q6GNN8"/>
<dbReference type="BioGRID" id="102470">
    <property type="interactions" value="1"/>
</dbReference>
<dbReference type="IntAct" id="Q6GNN8">
    <property type="interactions" value="1"/>
</dbReference>
<dbReference type="DNASU" id="444307"/>
<dbReference type="GeneID" id="444307"/>
<dbReference type="KEGG" id="xla:444307"/>
<dbReference type="AGR" id="Xenbase:XB-GENE-954324"/>
<dbReference type="CTD" id="444307"/>
<dbReference type="Xenbase" id="XB-GENE-954324">
    <property type="gene designation" value="chmp4c.L"/>
</dbReference>
<dbReference type="OMA" id="DKIDDMM"/>
<dbReference type="OrthoDB" id="5592979at2759"/>
<dbReference type="Proteomes" id="UP000186698">
    <property type="component" value="Chromosome 6L"/>
</dbReference>
<dbReference type="Bgee" id="444307">
    <property type="expression patterns" value="Expressed in intestine and 14 other cell types or tissues"/>
</dbReference>
<dbReference type="GO" id="GO:0009898">
    <property type="term" value="C:cytoplasmic side of plasma membrane"/>
    <property type="evidence" value="ECO:0000318"/>
    <property type="project" value="GO_Central"/>
</dbReference>
<dbReference type="GO" id="GO:0005829">
    <property type="term" value="C:cytosol"/>
    <property type="evidence" value="ECO:0007669"/>
    <property type="project" value="UniProtKB-SubCell"/>
</dbReference>
<dbReference type="GO" id="GO:0000815">
    <property type="term" value="C:ESCRT III complex"/>
    <property type="evidence" value="ECO:0000318"/>
    <property type="project" value="GO_Central"/>
</dbReference>
<dbReference type="GO" id="GO:0031902">
    <property type="term" value="C:late endosome membrane"/>
    <property type="evidence" value="ECO:0007669"/>
    <property type="project" value="UniProtKB-SubCell"/>
</dbReference>
<dbReference type="GO" id="GO:0005771">
    <property type="term" value="C:multivesicular body"/>
    <property type="evidence" value="ECO:0000318"/>
    <property type="project" value="GO_Central"/>
</dbReference>
<dbReference type="GO" id="GO:0032511">
    <property type="term" value="P:late endosome to vacuole transport via multivesicular body sorting pathway"/>
    <property type="evidence" value="ECO:0000318"/>
    <property type="project" value="GO_Central"/>
</dbReference>
<dbReference type="GO" id="GO:0061952">
    <property type="term" value="P:midbody abscission"/>
    <property type="evidence" value="ECO:0000250"/>
    <property type="project" value="UniProtKB"/>
</dbReference>
<dbReference type="GO" id="GO:0044878">
    <property type="term" value="P:mitotic cytokinesis checkpoint signaling"/>
    <property type="evidence" value="ECO:0000250"/>
    <property type="project" value="UniProtKB"/>
</dbReference>
<dbReference type="GO" id="GO:0032466">
    <property type="term" value="P:negative regulation of cytokinesis"/>
    <property type="evidence" value="ECO:0000250"/>
    <property type="project" value="UniProtKB"/>
</dbReference>
<dbReference type="GO" id="GO:0015031">
    <property type="term" value="P:protein transport"/>
    <property type="evidence" value="ECO:0007669"/>
    <property type="project" value="UniProtKB-KW"/>
</dbReference>
<dbReference type="GO" id="GO:0006900">
    <property type="term" value="P:vesicle budding from membrane"/>
    <property type="evidence" value="ECO:0000318"/>
    <property type="project" value="GO_Central"/>
</dbReference>
<dbReference type="FunFam" id="1.10.287.1060:FF:000001">
    <property type="entry name" value="Charged multivesicular body protein 4b"/>
    <property type="match status" value="1"/>
</dbReference>
<dbReference type="Gene3D" id="6.10.250.1710">
    <property type="match status" value="1"/>
</dbReference>
<dbReference type="Gene3D" id="1.10.287.1060">
    <property type="entry name" value="ESAT-6-like"/>
    <property type="match status" value="1"/>
</dbReference>
<dbReference type="InterPro" id="IPR005024">
    <property type="entry name" value="Snf7_fam"/>
</dbReference>
<dbReference type="PANTHER" id="PTHR22761">
    <property type="entry name" value="CHARGED MULTIVESICULAR BODY PROTEIN"/>
    <property type="match status" value="1"/>
</dbReference>
<dbReference type="PANTHER" id="PTHR22761:SF77">
    <property type="entry name" value="CHARGED MULTIVESICULAR BODY PROTEIN 4C"/>
    <property type="match status" value="1"/>
</dbReference>
<dbReference type="Pfam" id="PF03357">
    <property type="entry name" value="Snf7"/>
    <property type="match status" value="1"/>
</dbReference>